<gene>
    <name evidence="1" type="primary">uvrC</name>
    <name type="ordered locus">Ava_4295</name>
</gene>
<organism>
    <name type="scientific">Trichormus variabilis (strain ATCC 29413 / PCC 7937)</name>
    <name type="common">Anabaena variabilis</name>
    <dbReference type="NCBI Taxonomy" id="240292"/>
    <lineage>
        <taxon>Bacteria</taxon>
        <taxon>Bacillati</taxon>
        <taxon>Cyanobacteriota</taxon>
        <taxon>Cyanophyceae</taxon>
        <taxon>Nostocales</taxon>
        <taxon>Nostocaceae</taxon>
        <taxon>Trichormus</taxon>
    </lineage>
</organism>
<comment type="function">
    <text evidence="1">The UvrABC repair system catalyzes the recognition and processing of DNA lesions. UvrC both incises the 5' and 3' sides of the lesion. The N-terminal half is responsible for the 3' incision and the C-terminal half is responsible for the 5' incision.</text>
</comment>
<comment type="subunit">
    <text evidence="1">Interacts with UvrB in an incision complex.</text>
</comment>
<comment type="subcellular location">
    <subcellularLocation>
        <location evidence="1">Cytoplasm</location>
    </subcellularLocation>
</comment>
<comment type="similarity">
    <text evidence="1">Belongs to the UvrC family.</text>
</comment>
<keyword id="KW-0963">Cytoplasm</keyword>
<keyword id="KW-0227">DNA damage</keyword>
<keyword id="KW-0228">DNA excision</keyword>
<keyword id="KW-0234">DNA repair</keyword>
<keyword id="KW-0267">Excision nuclease</keyword>
<keyword id="KW-0742">SOS response</keyword>
<evidence type="ECO:0000255" key="1">
    <source>
        <dbReference type="HAMAP-Rule" id="MF_00203"/>
    </source>
</evidence>
<accession>Q3M542</accession>
<feature type="chain" id="PRO_0000264863" description="UvrABC system protein C">
    <location>
        <begin position="1"/>
        <end position="627"/>
    </location>
</feature>
<feature type="domain" description="GIY-YIG" evidence="1">
    <location>
        <begin position="26"/>
        <end position="105"/>
    </location>
</feature>
<feature type="domain" description="UVR" evidence="1">
    <location>
        <begin position="215"/>
        <end position="250"/>
    </location>
</feature>
<dbReference type="EMBL" id="CP000117">
    <property type="protein sequence ID" value="ABA23894.1"/>
    <property type="molecule type" value="Genomic_DNA"/>
</dbReference>
<dbReference type="SMR" id="Q3M542"/>
<dbReference type="STRING" id="240292.Ava_4295"/>
<dbReference type="KEGG" id="ava:Ava_4295"/>
<dbReference type="eggNOG" id="COG0322">
    <property type="taxonomic scope" value="Bacteria"/>
</dbReference>
<dbReference type="HOGENOM" id="CLU_014841_3_2_3"/>
<dbReference type="Proteomes" id="UP000002533">
    <property type="component" value="Chromosome"/>
</dbReference>
<dbReference type="GO" id="GO:0005737">
    <property type="term" value="C:cytoplasm"/>
    <property type="evidence" value="ECO:0007669"/>
    <property type="project" value="UniProtKB-SubCell"/>
</dbReference>
<dbReference type="GO" id="GO:0009380">
    <property type="term" value="C:excinuclease repair complex"/>
    <property type="evidence" value="ECO:0007669"/>
    <property type="project" value="InterPro"/>
</dbReference>
<dbReference type="GO" id="GO:0003677">
    <property type="term" value="F:DNA binding"/>
    <property type="evidence" value="ECO:0007669"/>
    <property type="project" value="UniProtKB-UniRule"/>
</dbReference>
<dbReference type="GO" id="GO:0009381">
    <property type="term" value="F:excinuclease ABC activity"/>
    <property type="evidence" value="ECO:0007669"/>
    <property type="project" value="UniProtKB-UniRule"/>
</dbReference>
<dbReference type="GO" id="GO:0006289">
    <property type="term" value="P:nucleotide-excision repair"/>
    <property type="evidence" value="ECO:0007669"/>
    <property type="project" value="UniProtKB-UniRule"/>
</dbReference>
<dbReference type="GO" id="GO:0009432">
    <property type="term" value="P:SOS response"/>
    <property type="evidence" value="ECO:0007669"/>
    <property type="project" value="UniProtKB-UniRule"/>
</dbReference>
<dbReference type="CDD" id="cd10434">
    <property type="entry name" value="GIY-YIG_UvrC_Cho"/>
    <property type="match status" value="1"/>
</dbReference>
<dbReference type="FunFam" id="3.40.1440.10:FF:000001">
    <property type="entry name" value="UvrABC system protein C"/>
    <property type="match status" value="1"/>
</dbReference>
<dbReference type="Gene3D" id="1.10.150.20">
    <property type="entry name" value="5' to 3' exonuclease, C-terminal subdomain"/>
    <property type="match status" value="1"/>
</dbReference>
<dbReference type="Gene3D" id="3.40.1440.10">
    <property type="entry name" value="GIY-YIG endonuclease"/>
    <property type="match status" value="1"/>
</dbReference>
<dbReference type="Gene3D" id="4.10.860.10">
    <property type="entry name" value="UVR domain"/>
    <property type="match status" value="1"/>
</dbReference>
<dbReference type="Gene3D" id="3.30.420.340">
    <property type="entry name" value="UvrC, RNAse H endonuclease domain"/>
    <property type="match status" value="1"/>
</dbReference>
<dbReference type="HAMAP" id="MF_00203">
    <property type="entry name" value="UvrC"/>
    <property type="match status" value="1"/>
</dbReference>
<dbReference type="InterPro" id="IPR041663">
    <property type="entry name" value="DisA/LigA_HHH"/>
</dbReference>
<dbReference type="InterPro" id="IPR000305">
    <property type="entry name" value="GIY-YIG_endonuc"/>
</dbReference>
<dbReference type="InterPro" id="IPR035901">
    <property type="entry name" value="GIY-YIG_endonuc_sf"/>
</dbReference>
<dbReference type="InterPro" id="IPR047296">
    <property type="entry name" value="GIY-YIG_UvrC_Cho"/>
</dbReference>
<dbReference type="InterPro" id="IPR003583">
    <property type="entry name" value="Hlx-hairpin-Hlx_DNA-bd_motif"/>
</dbReference>
<dbReference type="InterPro" id="IPR010994">
    <property type="entry name" value="RuvA_2-like"/>
</dbReference>
<dbReference type="InterPro" id="IPR001943">
    <property type="entry name" value="UVR_dom"/>
</dbReference>
<dbReference type="InterPro" id="IPR036876">
    <property type="entry name" value="UVR_dom_sf"/>
</dbReference>
<dbReference type="InterPro" id="IPR050066">
    <property type="entry name" value="UvrABC_protein_C"/>
</dbReference>
<dbReference type="InterPro" id="IPR004791">
    <property type="entry name" value="UvrC"/>
</dbReference>
<dbReference type="InterPro" id="IPR001162">
    <property type="entry name" value="UvrC_RNase_H_dom"/>
</dbReference>
<dbReference type="InterPro" id="IPR038476">
    <property type="entry name" value="UvrC_RNase_H_dom_sf"/>
</dbReference>
<dbReference type="NCBIfam" id="NF001824">
    <property type="entry name" value="PRK00558.1-5"/>
    <property type="match status" value="1"/>
</dbReference>
<dbReference type="NCBIfam" id="TIGR00194">
    <property type="entry name" value="uvrC"/>
    <property type="match status" value="1"/>
</dbReference>
<dbReference type="PANTHER" id="PTHR30562:SF1">
    <property type="entry name" value="UVRABC SYSTEM PROTEIN C"/>
    <property type="match status" value="1"/>
</dbReference>
<dbReference type="PANTHER" id="PTHR30562">
    <property type="entry name" value="UVRC/OXIDOREDUCTASE"/>
    <property type="match status" value="1"/>
</dbReference>
<dbReference type="Pfam" id="PF01541">
    <property type="entry name" value="GIY-YIG"/>
    <property type="match status" value="1"/>
</dbReference>
<dbReference type="Pfam" id="PF12826">
    <property type="entry name" value="HHH_2"/>
    <property type="match status" value="1"/>
</dbReference>
<dbReference type="Pfam" id="PF02151">
    <property type="entry name" value="UVR"/>
    <property type="match status" value="1"/>
</dbReference>
<dbReference type="Pfam" id="PF22920">
    <property type="entry name" value="UvrC_RNaseH"/>
    <property type="match status" value="1"/>
</dbReference>
<dbReference type="Pfam" id="PF08459">
    <property type="entry name" value="UvrC_RNaseH_dom"/>
    <property type="match status" value="1"/>
</dbReference>
<dbReference type="SMART" id="SM00465">
    <property type="entry name" value="GIYc"/>
    <property type="match status" value="1"/>
</dbReference>
<dbReference type="SMART" id="SM00278">
    <property type="entry name" value="HhH1"/>
    <property type="match status" value="2"/>
</dbReference>
<dbReference type="SUPFAM" id="SSF46600">
    <property type="entry name" value="C-terminal UvrC-binding domain of UvrB"/>
    <property type="match status" value="1"/>
</dbReference>
<dbReference type="SUPFAM" id="SSF82771">
    <property type="entry name" value="GIY-YIG endonuclease"/>
    <property type="match status" value="1"/>
</dbReference>
<dbReference type="SUPFAM" id="SSF47781">
    <property type="entry name" value="RuvA domain 2-like"/>
    <property type="match status" value="1"/>
</dbReference>
<dbReference type="PROSITE" id="PS50164">
    <property type="entry name" value="GIY_YIG"/>
    <property type="match status" value="1"/>
</dbReference>
<dbReference type="PROSITE" id="PS50151">
    <property type="entry name" value="UVR"/>
    <property type="match status" value="1"/>
</dbReference>
<dbReference type="PROSITE" id="PS50165">
    <property type="entry name" value="UVRC"/>
    <property type="match status" value="1"/>
</dbReference>
<protein>
    <recommendedName>
        <fullName evidence="1">UvrABC system protein C</fullName>
        <shortName evidence="1">Protein UvrC</shortName>
    </recommendedName>
    <alternativeName>
        <fullName evidence="1">Excinuclease ABC subunit C</fullName>
    </alternativeName>
</protein>
<reference key="1">
    <citation type="journal article" date="2014" name="Stand. Genomic Sci.">
        <title>Complete genome sequence of Anabaena variabilis ATCC 29413.</title>
        <authorList>
            <person name="Thiel T."/>
            <person name="Pratte B.S."/>
            <person name="Zhong J."/>
            <person name="Goodwin L."/>
            <person name="Copeland A."/>
            <person name="Lucas S."/>
            <person name="Han C."/>
            <person name="Pitluck S."/>
            <person name="Land M.L."/>
            <person name="Kyrpides N.C."/>
            <person name="Woyke T."/>
        </authorList>
    </citation>
    <scope>NUCLEOTIDE SEQUENCE [LARGE SCALE GENOMIC DNA]</scope>
    <source>
        <strain>ATCC 29413 / PCC 7937</strain>
    </source>
</reference>
<name>UVRC_TRIV2</name>
<proteinExistence type="inferred from homology"/>
<sequence length="627" mass="71732">MRTSAQILPLVKDPERLEARLSEIPPEPGVYFMRDGSDRIIYIGKSRKLRSRVRSYFREGYNKTERIATMAKLVTEIEFIVTDTEAEALALEANLIKQHQPYFNVLLKDDKKYPYVCITWSEDYPRIFITRKRQLGKEKDKYYGPYTDSGLLREILRISKRIFALRQRPQPLFKDRPCLNYDLGRCPGVCQQLISPEEYRKTVQKVAMVFQGRTQELIDILSEQMEKAAEALNFEVAARIRDQIAGLKSLTAEQKVSLPDDTVSRDAIALAADAQHACIQLFQIRAGQLVGRLAFVAESHAEPGAILQRVLEEHYQTAESVEIPAEILVQHELPDAEILADVLTQRKGRKVTIFTPQRQVKAELIEMVERNAQYELQRMQKLGDRNHQATQDLAAILDLPDLPHRIEGYDISHIQGSNAVASQVVFIDGLPAKQNYRHYKIKNPTVTIGHSDDFASLAEVIQRRFRKYAEDPQLSRVGNPDWPDLIMIDGGKGQLSSVVAVLQEMNLLEDLRVISLAKRREEIFLPGESQPLKTDAEQPGVQLLRRLRDEAHRFAVSFHRQQRSDKLKRSRLDEIPGLGHHRQKQLLAHFRSVDYIRQATPAQIAEVPGIGPHLAQAIYDYFHPSHV</sequence>